<reference key="1">
    <citation type="journal article" date="2009" name="Genome Res.">
        <title>Comparative genomic analyses of the human fungal pathogens Coccidioides and their relatives.</title>
        <authorList>
            <person name="Sharpton T.J."/>
            <person name="Stajich J.E."/>
            <person name="Rounsley S.D."/>
            <person name="Gardner M.J."/>
            <person name="Wortman J.R."/>
            <person name="Jordar V.S."/>
            <person name="Maiti R."/>
            <person name="Kodira C.D."/>
            <person name="Neafsey D.E."/>
            <person name="Zeng Q."/>
            <person name="Hung C.-Y."/>
            <person name="McMahan C."/>
            <person name="Muszewska A."/>
            <person name="Grynberg M."/>
            <person name="Mandel M.A."/>
            <person name="Kellner E.M."/>
            <person name="Barker B.M."/>
            <person name="Galgiani J.N."/>
            <person name="Orbach M.J."/>
            <person name="Kirkland T.N."/>
            <person name="Cole G.T."/>
            <person name="Henn M.R."/>
            <person name="Birren B.W."/>
            <person name="Taylor J.W."/>
        </authorList>
    </citation>
    <scope>NUCLEOTIDE SEQUENCE [LARGE SCALE GENOMIC DNA]</scope>
    <source>
        <strain>C735</strain>
    </source>
</reference>
<accession>C5PHH6</accession>
<organism>
    <name type="scientific">Coccidioides posadasii (strain C735)</name>
    <name type="common">Valley fever fungus</name>
    <dbReference type="NCBI Taxonomy" id="222929"/>
    <lineage>
        <taxon>Eukaryota</taxon>
        <taxon>Fungi</taxon>
        <taxon>Dikarya</taxon>
        <taxon>Ascomycota</taxon>
        <taxon>Pezizomycotina</taxon>
        <taxon>Eurotiomycetes</taxon>
        <taxon>Eurotiomycetidae</taxon>
        <taxon>Onygenales</taxon>
        <taxon>Onygenaceae</taxon>
        <taxon>Coccidioides</taxon>
    </lineage>
</organism>
<evidence type="ECO:0000250" key="1"/>
<evidence type="ECO:0000255" key="2">
    <source>
        <dbReference type="PROSITE-ProRule" id="PRU00227"/>
    </source>
</evidence>
<evidence type="ECO:0000256" key="3">
    <source>
        <dbReference type="SAM" id="MobiDB-lite"/>
    </source>
</evidence>
<evidence type="ECO:0000305" key="4"/>
<feature type="chain" id="PRO_0000406438" description="Transcription activator of gluconeogenesis CPC735_053490">
    <location>
        <begin position="1"/>
        <end position="713"/>
    </location>
</feature>
<feature type="DNA-binding region" description="Zn(2)-C6 fungal-type" evidence="2">
    <location>
        <begin position="77"/>
        <end position="105"/>
    </location>
</feature>
<feature type="region of interest" description="Disordered" evidence="3">
    <location>
        <begin position="1"/>
        <end position="70"/>
    </location>
</feature>
<feature type="region of interest" description="Disordered" evidence="3">
    <location>
        <begin position="145"/>
        <end position="229"/>
    </location>
</feature>
<feature type="region of interest" description="Disordered" evidence="3">
    <location>
        <begin position="274"/>
        <end position="318"/>
    </location>
</feature>
<feature type="region of interest" description="Disordered" evidence="3">
    <location>
        <begin position="541"/>
        <end position="564"/>
    </location>
</feature>
<feature type="region of interest" description="Disordered" evidence="3">
    <location>
        <begin position="623"/>
        <end position="665"/>
    </location>
</feature>
<feature type="compositionally biased region" description="Polar residues" evidence="3">
    <location>
        <begin position="19"/>
        <end position="56"/>
    </location>
</feature>
<feature type="compositionally biased region" description="Polar residues" evidence="3">
    <location>
        <begin position="145"/>
        <end position="159"/>
    </location>
</feature>
<feature type="compositionally biased region" description="Low complexity" evidence="3">
    <location>
        <begin position="160"/>
        <end position="171"/>
    </location>
</feature>
<feature type="compositionally biased region" description="Polar residues" evidence="3">
    <location>
        <begin position="191"/>
        <end position="212"/>
    </location>
</feature>
<feature type="compositionally biased region" description="Low complexity" evidence="3">
    <location>
        <begin position="213"/>
        <end position="229"/>
    </location>
</feature>
<feature type="compositionally biased region" description="Polar residues" evidence="3">
    <location>
        <begin position="295"/>
        <end position="312"/>
    </location>
</feature>
<feature type="compositionally biased region" description="Polar residues" evidence="3">
    <location>
        <begin position="541"/>
        <end position="558"/>
    </location>
</feature>
<feature type="compositionally biased region" description="Polar residues" evidence="3">
    <location>
        <begin position="649"/>
        <end position="659"/>
    </location>
</feature>
<protein>
    <recommendedName>
        <fullName>Transcription activator of gluconeogenesis CPC735_053490</fullName>
    </recommendedName>
</protein>
<name>ACUK_COCP7</name>
<gene>
    <name type="ORF">CPC735_053490</name>
</gene>
<keyword id="KW-0010">Activator</keyword>
<keyword id="KW-0238">DNA-binding</keyword>
<keyword id="KW-0312">Gluconeogenesis</keyword>
<keyword id="KW-0479">Metal-binding</keyword>
<keyword id="KW-0539">Nucleus</keyword>
<keyword id="KW-0804">Transcription</keyword>
<keyword id="KW-0805">Transcription regulation</keyword>
<keyword id="KW-0862">Zinc</keyword>
<sequence>MTANAINGPVLPTPLATPGDNNKSADTTMADQGTRPESQPQGQNNGAKPQNGQTKPMSAANAKDPLRPRRKKAKRACFACQRAHLTCGDERPCQRCIKRGIQNACHDGVRKKAKYLHDAPNEALMPHLQGHLYTTQANTARNTIPLTRNGSNSKTNFYPQQQSSFNNFYQNKPDPTLNQPQLHDTGRPDTFPSQSPVSPTFNMTANPAASGNQGLPSSLSASNSNASGQAQNGFGSAFFDPSDPALFNFDLASMNFGNHYGALEFGMLGHMATGAGETPPSDGATQHGSVGRSGSGTYTAGSNFGESPTGQPSFLFGDPTIGGDWTSSVNTRNIYGQNMNNMSETPHAFAIESAPANFASPNSIESPLLTNTTTFDDNTAPTYANRANINSVPSQRQPVVSTPQLKHLQVGKRRQRNPSAIYDSVKEPYSYTTGFHSLTAFIQRRFSPQNTLRIAKALASIRPSFIATTKTLNRDDLIFMEKCFQRTLWEYEDFINACGTPTIVCRRTGEIAAVGKEFSILTGWKKEVLLGKEPNLNINTGGSSGAMSGVTSRGSFTPRTGMDINPTGRTQPVFLAELLDDESVVEFYEDFAKLAFGDSRGSVMTTCKLLKYKTKADMDMLSGTTSSAGGENEHGAAGNGDVKPENGMGASNGQSQHSLQRQRKWSRGGIAGEAGMNQLGFKDGKVECSYCWTVKRDVFDIPMLIVMNFLPCI</sequence>
<comment type="function">
    <text evidence="1">Transcription factor which regulates nonfermentable carbon utilization. Activator of gluconeogenetic genes (By similarity).</text>
</comment>
<comment type="subcellular location">
    <subcellularLocation>
        <location evidence="2">Nucleus</location>
    </subcellularLocation>
</comment>
<comment type="similarity">
    <text evidence="4">Belongs to the ERT1/acuK family.</text>
</comment>
<proteinExistence type="inferred from homology"/>
<dbReference type="EMBL" id="ACFW01000049">
    <property type="protein sequence ID" value="EER23979.1"/>
    <property type="molecule type" value="Genomic_DNA"/>
</dbReference>
<dbReference type="SMR" id="C5PHH6"/>
<dbReference type="KEGG" id="cpw:9691594"/>
<dbReference type="VEuPathDB" id="FungiDB:CPC735_053490"/>
<dbReference type="HOGENOM" id="CLU_010748_1_0_1"/>
<dbReference type="OrthoDB" id="2538135at2759"/>
<dbReference type="Proteomes" id="UP000009084">
    <property type="component" value="Unassembled WGS sequence"/>
</dbReference>
<dbReference type="GO" id="GO:0005634">
    <property type="term" value="C:nucleus"/>
    <property type="evidence" value="ECO:0007669"/>
    <property type="project" value="UniProtKB-SubCell"/>
</dbReference>
<dbReference type="GO" id="GO:0000981">
    <property type="term" value="F:DNA-binding transcription factor activity, RNA polymerase II-specific"/>
    <property type="evidence" value="ECO:0007669"/>
    <property type="project" value="InterPro"/>
</dbReference>
<dbReference type="GO" id="GO:0000977">
    <property type="term" value="F:RNA polymerase II transcription regulatory region sequence-specific DNA binding"/>
    <property type="evidence" value="ECO:0007669"/>
    <property type="project" value="TreeGrafter"/>
</dbReference>
<dbReference type="GO" id="GO:0008270">
    <property type="term" value="F:zinc ion binding"/>
    <property type="evidence" value="ECO:0007669"/>
    <property type="project" value="InterPro"/>
</dbReference>
<dbReference type="GO" id="GO:0009267">
    <property type="term" value="P:cellular response to starvation"/>
    <property type="evidence" value="ECO:0007669"/>
    <property type="project" value="TreeGrafter"/>
</dbReference>
<dbReference type="GO" id="GO:0006094">
    <property type="term" value="P:gluconeogenesis"/>
    <property type="evidence" value="ECO:0007669"/>
    <property type="project" value="UniProtKB-KW"/>
</dbReference>
<dbReference type="CDD" id="cd00067">
    <property type="entry name" value="GAL4"/>
    <property type="match status" value="1"/>
</dbReference>
<dbReference type="Gene3D" id="4.10.240.10">
    <property type="entry name" value="Zn(2)-C6 fungal-type DNA-binding domain"/>
    <property type="match status" value="1"/>
</dbReference>
<dbReference type="InterPro" id="IPR050335">
    <property type="entry name" value="ERT1_acuK_gluconeogen_tf"/>
</dbReference>
<dbReference type="InterPro" id="IPR056751">
    <property type="entry name" value="PAS_13"/>
</dbReference>
<dbReference type="InterPro" id="IPR036864">
    <property type="entry name" value="Zn2-C6_fun-type_DNA-bd_sf"/>
</dbReference>
<dbReference type="InterPro" id="IPR001138">
    <property type="entry name" value="Zn2Cys6_DnaBD"/>
</dbReference>
<dbReference type="PANTHER" id="PTHR47659:SF1">
    <property type="entry name" value="TRANSCRIPTION ACTIVATOR OF GLUCONEOGENESIS ERT1"/>
    <property type="match status" value="1"/>
</dbReference>
<dbReference type="PANTHER" id="PTHR47659">
    <property type="entry name" value="ZN(II)2CYS6 TRANSCRIPTION FACTOR (EUROFUNG)-RELATED"/>
    <property type="match status" value="1"/>
</dbReference>
<dbReference type="Pfam" id="PF24990">
    <property type="entry name" value="PAS_13"/>
    <property type="match status" value="1"/>
</dbReference>
<dbReference type="SMART" id="SM00066">
    <property type="entry name" value="GAL4"/>
    <property type="match status" value="1"/>
</dbReference>
<dbReference type="SUPFAM" id="SSF57701">
    <property type="entry name" value="Zn2/Cys6 DNA-binding domain"/>
    <property type="match status" value="1"/>
</dbReference>
<dbReference type="PROSITE" id="PS50048">
    <property type="entry name" value="ZN2_CY6_FUNGAL_2"/>
    <property type="match status" value="1"/>
</dbReference>